<dbReference type="EC" id="4.3.1.19"/>
<dbReference type="EMBL" id="BX571857">
    <property type="protein sequence ID" value="CAG43773.1"/>
    <property type="molecule type" value="Genomic_DNA"/>
</dbReference>
<dbReference type="RefSeq" id="WP_000216855.1">
    <property type="nucleotide sequence ID" value="NC_002953.3"/>
</dbReference>
<dbReference type="SMR" id="Q3V7T4"/>
<dbReference type="KEGG" id="sas:SAS1966"/>
<dbReference type="HOGENOM" id="CLU_021152_4_2_9"/>
<dbReference type="UniPathway" id="UPA00047">
    <property type="reaction ID" value="UER00054"/>
</dbReference>
<dbReference type="GO" id="GO:0003941">
    <property type="term" value="F:L-serine ammonia-lyase activity"/>
    <property type="evidence" value="ECO:0007669"/>
    <property type="project" value="TreeGrafter"/>
</dbReference>
<dbReference type="GO" id="GO:0030170">
    <property type="term" value="F:pyridoxal phosphate binding"/>
    <property type="evidence" value="ECO:0007669"/>
    <property type="project" value="InterPro"/>
</dbReference>
<dbReference type="GO" id="GO:0004794">
    <property type="term" value="F:threonine deaminase activity"/>
    <property type="evidence" value="ECO:0007669"/>
    <property type="project" value="UniProtKB-EC"/>
</dbReference>
<dbReference type="GO" id="GO:0009097">
    <property type="term" value="P:isoleucine biosynthetic process"/>
    <property type="evidence" value="ECO:0007669"/>
    <property type="project" value="UniProtKB-UniPathway"/>
</dbReference>
<dbReference type="GO" id="GO:0006565">
    <property type="term" value="P:L-serine catabolic process"/>
    <property type="evidence" value="ECO:0007669"/>
    <property type="project" value="TreeGrafter"/>
</dbReference>
<dbReference type="GO" id="GO:0006567">
    <property type="term" value="P:threonine catabolic process"/>
    <property type="evidence" value="ECO:0007669"/>
    <property type="project" value="TreeGrafter"/>
</dbReference>
<dbReference type="GO" id="GO:0006566">
    <property type="term" value="P:threonine metabolic process"/>
    <property type="evidence" value="ECO:0000250"/>
    <property type="project" value="UniProtKB"/>
</dbReference>
<dbReference type="CDD" id="cd04907">
    <property type="entry name" value="ACT_ThrD-I_2"/>
    <property type="match status" value="1"/>
</dbReference>
<dbReference type="CDD" id="cd01562">
    <property type="entry name" value="Thr-dehyd"/>
    <property type="match status" value="1"/>
</dbReference>
<dbReference type="FunFam" id="3.40.1020.10:FF:000002">
    <property type="entry name" value="L-threonine dehydratase"/>
    <property type="match status" value="1"/>
</dbReference>
<dbReference type="FunFam" id="3.40.50.1100:FF:000005">
    <property type="entry name" value="Threonine dehydratase catabolic"/>
    <property type="match status" value="1"/>
</dbReference>
<dbReference type="Gene3D" id="3.40.50.1100">
    <property type="match status" value="2"/>
</dbReference>
<dbReference type="Gene3D" id="3.40.1020.10">
    <property type="entry name" value="Biosynthetic Threonine Deaminase, Domain 3"/>
    <property type="match status" value="1"/>
</dbReference>
<dbReference type="InterPro" id="IPR045865">
    <property type="entry name" value="ACT-like_dom_sf"/>
</dbReference>
<dbReference type="InterPro" id="IPR011820">
    <property type="entry name" value="IlvA"/>
</dbReference>
<dbReference type="InterPro" id="IPR050147">
    <property type="entry name" value="Ser/Thr_Dehydratase"/>
</dbReference>
<dbReference type="InterPro" id="IPR000634">
    <property type="entry name" value="Ser/Thr_deHydtase_PyrdxlP-BS"/>
</dbReference>
<dbReference type="InterPro" id="IPR001721">
    <property type="entry name" value="TD_ACT-like"/>
</dbReference>
<dbReference type="InterPro" id="IPR038110">
    <property type="entry name" value="TD_ACT-like_sf"/>
</dbReference>
<dbReference type="InterPro" id="IPR001926">
    <property type="entry name" value="TrpB-like_PALP"/>
</dbReference>
<dbReference type="InterPro" id="IPR036052">
    <property type="entry name" value="TrpB-like_PALP_sf"/>
</dbReference>
<dbReference type="NCBIfam" id="NF006390">
    <property type="entry name" value="PRK08639.1"/>
    <property type="match status" value="1"/>
</dbReference>
<dbReference type="NCBIfam" id="TIGR02079">
    <property type="entry name" value="THD1"/>
    <property type="match status" value="1"/>
</dbReference>
<dbReference type="PANTHER" id="PTHR48078:SF11">
    <property type="entry name" value="THREONINE DEHYDRATASE, MITOCHONDRIAL"/>
    <property type="match status" value="1"/>
</dbReference>
<dbReference type="PANTHER" id="PTHR48078">
    <property type="entry name" value="THREONINE DEHYDRATASE, MITOCHONDRIAL-RELATED"/>
    <property type="match status" value="1"/>
</dbReference>
<dbReference type="Pfam" id="PF00291">
    <property type="entry name" value="PALP"/>
    <property type="match status" value="1"/>
</dbReference>
<dbReference type="Pfam" id="PF00585">
    <property type="entry name" value="Thr_dehydrat_C"/>
    <property type="match status" value="1"/>
</dbReference>
<dbReference type="SUPFAM" id="SSF55021">
    <property type="entry name" value="ACT-like"/>
    <property type="match status" value="1"/>
</dbReference>
<dbReference type="SUPFAM" id="SSF53686">
    <property type="entry name" value="Tryptophan synthase beta subunit-like PLP-dependent enzymes"/>
    <property type="match status" value="1"/>
</dbReference>
<dbReference type="PROSITE" id="PS51672">
    <property type="entry name" value="ACT_LIKE"/>
    <property type="match status" value="1"/>
</dbReference>
<dbReference type="PROSITE" id="PS00165">
    <property type="entry name" value="DEHYDRATASE_SER_THR"/>
    <property type="match status" value="1"/>
</dbReference>
<feature type="chain" id="PRO_0000234310" description="L-threonine dehydratase biosynthetic IlvA">
    <location>
        <begin position="1"/>
        <end position="422"/>
    </location>
</feature>
<feature type="domain" description="ACT-like" evidence="2">
    <location>
        <begin position="339"/>
        <end position="413"/>
    </location>
</feature>
<feature type="binding site" evidence="1">
    <location>
        <position position="83"/>
    </location>
    <ligand>
        <name>pyridoxal 5'-phosphate</name>
        <dbReference type="ChEBI" id="CHEBI:597326"/>
    </ligand>
</feature>
<feature type="binding site" evidence="1">
    <location>
        <begin position="189"/>
        <end position="193"/>
    </location>
    <ligand>
        <name>pyridoxal 5'-phosphate</name>
        <dbReference type="ChEBI" id="CHEBI:597326"/>
    </ligand>
</feature>
<feature type="binding site" evidence="1">
    <location>
        <position position="315"/>
    </location>
    <ligand>
        <name>pyridoxal 5'-phosphate</name>
        <dbReference type="ChEBI" id="CHEBI:597326"/>
    </ligand>
</feature>
<feature type="modified residue" description="N6-(pyridoxal phosphate)lysine" evidence="1">
    <location>
        <position position="56"/>
    </location>
</feature>
<sequence>MTVKTTVSTKDIDEAFLRLKDIVKETPLQLDHYLSQKYDCKVYLKREDLQWVRSFKLRGAYNAISVLSDEAKSKGITCASAGNHAQGVAYTAKKLNLNAVIFMPVTTPLQKVNQVKFFGNSNVEVVLTGDTFDHCLAEALTYTSEHQMNFIDPFNNVHTISGQGTLAKEMLEQSKTDNVNFDYLFAAIGGGGLISGISTYFKTYSPTTKIIGVEPSGASSMYESVVVNNQVVTLPNIDKFVDGASVARVGDITFEIAKENVDDYVQVDEGAVCSTILDMYSKQAIVAEPAGALSVSALENYKDHIKGKTVVCVISGGNNDINRMKEIEERSLLYEEMKHYFILNFPQRPGALREFVNDVLGPQDDITKFEYLKKSSQNTGTVIIGIQLKDHDDLIQLKQRVNHFDPSNIYINENKMLYSLLI</sequence>
<name>ILVA_STAAS</name>
<evidence type="ECO:0000250" key="1"/>
<evidence type="ECO:0000255" key="2">
    <source>
        <dbReference type="PROSITE-ProRule" id="PRU01008"/>
    </source>
</evidence>
<evidence type="ECO:0000305" key="3"/>
<protein>
    <recommendedName>
        <fullName>L-threonine dehydratase biosynthetic IlvA</fullName>
        <ecNumber>4.3.1.19</ecNumber>
    </recommendedName>
    <alternativeName>
        <fullName>Threonine deaminase</fullName>
    </alternativeName>
</protein>
<comment type="function">
    <text evidence="1">Catalyzes the anaerobic formation of alpha-ketobutyrate and ammonia from threonine in a two-step reaction. The first step involved a dehydration of threonine and a production of enamine intermediates (aminocrotonate), which tautomerizes to its imine form (iminobutyrate). Both intermediates are unstable and short-lived. The second step is the nonenzymatic hydrolysis of the enamine/imine intermediates to form 2-ketobutyrate and free ammonia. In the low water environment of the cell, the second step is accelerated by RidA (By similarity).</text>
</comment>
<comment type="catalytic activity">
    <reaction>
        <text>L-threonine = 2-oxobutanoate + NH4(+)</text>
        <dbReference type="Rhea" id="RHEA:22108"/>
        <dbReference type="ChEBI" id="CHEBI:16763"/>
        <dbReference type="ChEBI" id="CHEBI:28938"/>
        <dbReference type="ChEBI" id="CHEBI:57926"/>
        <dbReference type="EC" id="4.3.1.19"/>
    </reaction>
</comment>
<comment type="cofactor">
    <cofactor evidence="1">
        <name>pyridoxal 5'-phosphate</name>
        <dbReference type="ChEBI" id="CHEBI:597326"/>
    </cofactor>
</comment>
<comment type="pathway">
    <text>Amino-acid biosynthesis; L-isoleucine biosynthesis; 2-oxobutanoate from L-threonine: step 1/1.</text>
</comment>
<comment type="subunit">
    <text evidence="1">Homotetramer.</text>
</comment>
<comment type="similarity">
    <text evidence="3">Belongs to the serine/threonine dehydratase family.</text>
</comment>
<proteinExistence type="inferred from homology"/>
<accession>Q3V7T4</accession>
<organism>
    <name type="scientific">Staphylococcus aureus (strain MSSA476)</name>
    <dbReference type="NCBI Taxonomy" id="282459"/>
    <lineage>
        <taxon>Bacteria</taxon>
        <taxon>Bacillati</taxon>
        <taxon>Bacillota</taxon>
        <taxon>Bacilli</taxon>
        <taxon>Bacillales</taxon>
        <taxon>Staphylococcaceae</taxon>
        <taxon>Staphylococcus</taxon>
    </lineage>
</organism>
<reference key="1">
    <citation type="journal article" date="2004" name="Proc. Natl. Acad. Sci. U.S.A.">
        <title>Complete genomes of two clinical Staphylococcus aureus strains: evidence for the rapid evolution of virulence and drug resistance.</title>
        <authorList>
            <person name="Holden M.T.G."/>
            <person name="Feil E.J."/>
            <person name="Lindsay J.A."/>
            <person name="Peacock S.J."/>
            <person name="Day N.P.J."/>
            <person name="Enright M.C."/>
            <person name="Foster T.J."/>
            <person name="Moore C.E."/>
            <person name="Hurst L."/>
            <person name="Atkin R."/>
            <person name="Barron A."/>
            <person name="Bason N."/>
            <person name="Bentley S.D."/>
            <person name="Chillingworth C."/>
            <person name="Chillingworth T."/>
            <person name="Churcher C."/>
            <person name="Clark L."/>
            <person name="Corton C."/>
            <person name="Cronin A."/>
            <person name="Doggett J."/>
            <person name="Dowd L."/>
            <person name="Feltwell T."/>
            <person name="Hance Z."/>
            <person name="Harris B."/>
            <person name="Hauser H."/>
            <person name="Holroyd S."/>
            <person name="Jagels K."/>
            <person name="James K.D."/>
            <person name="Lennard N."/>
            <person name="Line A."/>
            <person name="Mayes R."/>
            <person name="Moule S."/>
            <person name="Mungall K."/>
            <person name="Ormond D."/>
            <person name="Quail M.A."/>
            <person name="Rabbinowitsch E."/>
            <person name="Rutherford K.M."/>
            <person name="Sanders M."/>
            <person name="Sharp S."/>
            <person name="Simmonds M."/>
            <person name="Stevens K."/>
            <person name="Whitehead S."/>
            <person name="Barrell B.G."/>
            <person name="Spratt B.G."/>
            <person name="Parkhill J."/>
        </authorList>
    </citation>
    <scope>NUCLEOTIDE SEQUENCE [LARGE SCALE GENOMIC DNA]</scope>
    <source>
        <strain>MSSA476</strain>
    </source>
</reference>
<keyword id="KW-0028">Amino-acid biosynthesis</keyword>
<keyword id="KW-0100">Branched-chain amino acid biosynthesis</keyword>
<keyword id="KW-0412">Isoleucine biosynthesis</keyword>
<keyword id="KW-0456">Lyase</keyword>
<keyword id="KW-0663">Pyridoxal phosphate</keyword>
<gene>
    <name type="primary">ilvA</name>
    <name type="ordered locus">SAS1966</name>
</gene>